<keyword id="KW-0029">Amino-acid transport</keyword>
<keyword id="KW-0067">ATP-binding</keyword>
<keyword id="KW-1003">Cell membrane</keyword>
<keyword id="KW-0472">Membrane</keyword>
<keyword id="KW-0547">Nucleotide-binding</keyword>
<keyword id="KW-1185">Reference proteome</keyword>
<keyword id="KW-1278">Translocase</keyword>
<keyword id="KW-0813">Transport</keyword>
<accession>Q88UV2</accession>
<accession>F9UQQ4</accession>
<gene>
    <name evidence="1" type="primary">metN2</name>
    <name type="ordered locus">lp_2352</name>
</gene>
<organism>
    <name type="scientific">Lactiplantibacillus plantarum (strain ATCC BAA-793 / NCIMB 8826 / WCFS1)</name>
    <name type="common">Lactobacillus plantarum</name>
    <dbReference type="NCBI Taxonomy" id="220668"/>
    <lineage>
        <taxon>Bacteria</taxon>
        <taxon>Bacillati</taxon>
        <taxon>Bacillota</taxon>
        <taxon>Bacilli</taxon>
        <taxon>Lactobacillales</taxon>
        <taxon>Lactobacillaceae</taxon>
        <taxon>Lactiplantibacillus</taxon>
    </lineage>
</organism>
<name>METN2_LACPL</name>
<dbReference type="EC" id="7.4.2.11" evidence="1"/>
<dbReference type="EMBL" id="AL935263">
    <property type="protein sequence ID" value="CCC79543.1"/>
    <property type="molecule type" value="Genomic_DNA"/>
</dbReference>
<dbReference type="RefSeq" id="WP_003641452.1">
    <property type="nucleotide sequence ID" value="NC_004567.2"/>
</dbReference>
<dbReference type="RefSeq" id="YP_004890057.1">
    <property type="nucleotide sequence ID" value="NC_004567.2"/>
</dbReference>
<dbReference type="SMR" id="Q88UV2"/>
<dbReference type="STRING" id="220668.lp_2352"/>
<dbReference type="EnsemblBacteria" id="CCC79543">
    <property type="protein sequence ID" value="CCC79543"/>
    <property type="gene ID" value="lp_2352"/>
</dbReference>
<dbReference type="KEGG" id="lpl:lp_2352"/>
<dbReference type="PATRIC" id="fig|220668.9.peg.1988"/>
<dbReference type="eggNOG" id="COG1135">
    <property type="taxonomic scope" value="Bacteria"/>
</dbReference>
<dbReference type="HOGENOM" id="CLU_000604_1_3_9"/>
<dbReference type="OrthoDB" id="9802264at2"/>
<dbReference type="PhylomeDB" id="Q88UV2"/>
<dbReference type="Proteomes" id="UP000000432">
    <property type="component" value="Chromosome"/>
</dbReference>
<dbReference type="GO" id="GO:0005886">
    <property type="term" value="C:plasma membrane"/>
    <property type="evidence" value="ECO:0007669"/>
    <property type="project" value="UniProtKB-SubCell"/>
</dbReference>
<dbReference type="GO" id="GO:0033232">
    <property type="term" value="F:ABC-type D-methionine transporter activity"/>
    <property type="evidence" value="ECO:0007669"/>
    <property type="project" value="UniProtKB-EC"/>
</dbReference>
<dbReference type="GO" id="GO:0005524">
    <property type="term" value="F:ATP binding"/>
    <property type="evidence" value="ECO:0007669"/>
    <property type="project" value="UniProtKB-KW"/>
</dbReference>
<dbReference type="GO" id="GO:0016887">
    <property type="term" value="F:ATP hydrolysis activity"/>
    <property type="evidence" value="ECO:0007669"/>
    <property type="project" value="InterPro"/>
</dbReference>
<dbReference type="CDD" id="cd03258">
    <property type="entry name" value="ABC_MetN_methionine_transporter"/>
    <property type="match status" value="1"/>
</dbReference>
<dbReference type="FunFam" id="3.40.50.300:FF:000056">
    <property type="entry name" value="Cell division ATP-binding protein FtsE"/>
    <property type="match status" value="1"/>
</dbReference>
<dbReference type="Gene3D" id="3.30.70.260">
    <property type="match status" value="1"/>
</dbReference>
<dbReference type="Gene3D" id="3.40.50.300">
    <property type="entry name" value="P-loop containing nucleotide triphosphate hydrolases"/>
    <property type="match status" value="1"/>
</dbReference>
<dbReference type="InterPro" id="IPR003593">
    <property type="entry name" value="AAA+_ATPase"/>
</dbReference>
<dbReference type="InterPro" id="IPR003439">
    <property type="entry name" value="ABC_transporter-like_ATP-bd"/>
</dbReference>
<dbReference type="InterPro" id="IPR017871">
    <property type="entry name" value="ABC_transporter-like_CS"/>
</dbReference>
<dbReference type="InterPro" id="IPR045865">
    <property type="entry name" value="ACT-like_dom_sf"/>
</dbReference>
<dbReference type="InterPro" id="IPR041701">
    <property type="entry name" value="MetN_ABC"/>
</dbReference>
<dbReference type="InterPro" id="IPR050086">
    <property type="entry name" value="MetN_ABC_transporter-like"/>
</dbReference>
<dbReference type="InterPro" id="IPR018449">
    <property type="entry name" value="NIL_domain"/>
</dbReference>
<dbReference type="InterPro" id="IPR027417">
    <property type="entry name" value="P-loop_NTPase"/>
</dbReference>
<dbReference type="PANTHER" id="PTHR43166">
    <property type="entry name" value="AMINO ACID IMPORT ATP-BINDING PROTEIN"/>
    <property type="match status" value="1"/>
</dbReference>
<dbReference type="PANTHER" id="PTHR43166:SF36">
    <property type="entry name" value="METHIONINE IMPORT ATP-BINDING PROTEIN METN 2"/>
    <property type="match status" value="1"/>
</dbReference>
<dbReference type="Pfam" id="PF00005">
    <property type="entry name" value="ABC_tran"/>
    <property type="match status" value="1"/>
</dbReference>
<dbReference type="Pfam" id="PF09383">
    <property type="entry name" value="NIL"/>
    <property type="match status" value="1"/>
</dbReference>
<dbReference type="SMART" id="SM00382">
    <property type="entry name" value="AAA"/>
    <property type="match status" value="1"/>
</dbReference>
<dbReference type="SMART" id="SM00930">
    <property type="entry name" value="NIL"/>
    <property type="match status" value="1"/>
</dbReference>
<dbReference type="SUPFAM" id="SSF55021">
    <property type="entry name" value="ACT-like"/>
    <property type="match status" value="1"/>
</dbReference>
<dbReference type="SUPFAM" id="SSF52540">
    <property type="entry name" value="P-loop containing nucleoside triphosphate hydrolases"/>
    <property type="match status" value="1"/>
</dbReference>
<dbReference type="PROSITE" id="PS00211">
    <property type="entry name" value="ABC_TRANSPORTER_1"/>
    <property type="match status" value="1"/>
</dbReference>
<dbReference type="PROSITE" id="PS50893">
    <property type="entry name" value="ABC_TRANSPORTER_2"/>
    <property type="match status" value="1"/>
</dbReference>
<dbReference type="PROSITE" id="PS51264">
    <property type="entry name" value="METN"/>
    <property type="match status" value="1"/>
</dbReference>
<protein>
    <recommendedName>
        <fullName evidence="1">Methionine import ATP-binding protein MetN 2</fullName>
        <ecNumber evidence="1">7.4.2.11</ecNumber>
    </recommendedName>
</protein>
<feature type="chain" id="PRO_0000270317" description="Methionine import ATP-binding protein MetN 2">
    <location>
        <begin position="1"/>
        <end position="343"/>
    </location>
</feature>
<feature type="domain" description="ABC transporter" evidence="1">
    <location>
        <begin position="2"/>
        <end position="241"/>
    </location>
</feature>
<feature type="binding site" evidence="1">
    <location>
        <begin position="38"/>
        <end position="45"/>
    </location>
    <ligand>
        <name>ATP</name>
        <dbReference type="ChEBI" id="CHEBI:30616"/>
    </ligand>
</feature>
<reference key="1">
    <citation type="journal article" date="2003" name="Proc. Natl. Acad. Sci. U.S.A.">
        <title>Complete genome sequence of Lactobacillus plantarum WCFS1.</title>
        <authorList>
            <person name="Kleerebezem M."/>
            <person name="Boekhorst J."/>
            <person name="van Kranenburg R."/>
            <person name="Molenaar D."/>
            <person name="Kuipers O.P."/>
            <person name="Leer R."/>
            <person name="Tarchini R."/>
            <person name="Peters S.A."/>
            <person name="Sandbrink H.M."/>
            <person name="Fiers M.W.E.J."/>
            <person name="Stiekema W."/>
            <person name="Klein Lankhorst R.M."/>
            <person name="Bron P.A."/>
            <person name="Hoffer S.M."/>
            <person name="Nierop Groot M.N."/>
            <person name="Kerkhoven R."/>
            <person name="De Vries M."/>
            <person name="Ursing B."/>
            <person name="De Vos W.M."/>
            <person name="Siezen R.J."/>
        </authorList>
    </citation>
    <scope>NUCLEOTIDE SEQUENCE [LARGE SCALE GENOMIC DNA]</scope>
    <source>
        <strain>ATCC BAA-793 / NCIMB 8826 / WCFS1</strain>
    </source>
</reference>
<reference key="2">
    <citation type="journal article" date="2012" name="J. Bacteriol.">
        <title>Complete resequencing and reannotation of the Lactobacillus plantarum WCFS1 genome.</title>
        <authorList>
            <person name="Siezen R.J."/>
            <person name="Francke C."/>
            <person name="Renckens B."/>
            <person name="Boekhorst J."/>
            <person name="Wels M."/>
            <person name="Kleerebezem M."/>
            <person name="van Hijum S.A."/>
        </authorList>
    </citation>
    <scope>NUCLEOTIDE SEQUENCE [LARGE SCALE GENOMIC DNA]</scope>
    <scope>GENOME REANNOTATION</scope>
    <source>
        <strain>ATCC BAA-793 / NCIMB 8826 / WCFS1</strain>
    </source>
</reference>
<sequence>MIEFKDVTKTFDAKQGAVHAVQDVNLKIEDGHIYGIVGYSGAGKSTLVRMLNGLETPTSGSVVIDDVNITTLSGAKLRAQRQKIGMIFQHFNLLWSRTVLENIMFPLEIAGLSKVDARKKAEHLADLVGLAGRETAYPSELSGGQKQRVGIARALANDPQILLSDEATSALDPQTTDEVLDLLLSINQKLHLTIVLITHEMHVIRKIADHVAVMEAGKIVEQGPVLEVFKRPQQAVTKRFVNEEVTPSLNDTTVVVDQLLAKYPKGTIVQLTFHGDQAQLPIVSEMLKKYPLDLNIIEGGIHQTQEGAIGSLYLQLTGDQEQIKGALAYLQTMRVETEVLNRE</sequence>
<proteinExistence type="inferred from homology"/>
<evidence type="ECO:0000255" key="1">
    <source>
        <dbReference type="HAMAP-Rule" id="MF_01719"/>
    </source>
</evidence>
<comment type="function">
    <text evidence="1">Part of the ABC transporter complex MetNIQ involved in methionine import. Responsible for energy coupling to the transport system.</text>
</comment>
<comment type="catalytic activity">
    <reaction evidence="1">
        <text>L-methionine(out) + ATP + H2O = L-methionine(in) + ADP + phosphate + H(+)</text>
        <dbReference type="Rhea" id="RHEA:29779"/>
        <dbReference type="ChEBI" id="CHEBI:15377"/>
        <dbReference type="ChEBI" id="CHEBI:15378"/>
        <dbReference type="ChEBI" id="CHEBI:30616"/>
        <dbReference type="ChEBI" id="CHEBI:43474"/>
        <dbReference type="ChEBI" id="CHEBI:57844"/>
        <dbReference type="ChEBI" id="CHEBI:456216"/>
        <dbReference type="EC" id="7.4.2.11"/>
    </reaction>
</comment>
<comment type="catalytic activity">
    <reaction evidence="1">
        <text>D-methionine(out) + ATP + H2O = D-methionine(in) + ADP + phosphate + H(+)</text>
        <dbReference type="Rhea" id="RHEA:29767"/>
        <dbReference type="ChEBI" id="CHEBI:15377"/>
        <dbReference type="ChEBI" id="CHEBI:15378"/>
        <dbReference type="ChEBI" id="CHEBI:30616"/>
        <dbReference type="ChEBI" id="CHEBI:43474"/>
        <dbReference type="ChEBI" id="CHEBI:57932"/>
        <dbReference type="ChEBI" id="CHEBI:456216"/>
        <dbReference type="EC" id="7.4.2.11"/>
    </reaction>
</comment>
<comment type="subunit">
    <text evidence="1">The complex is composed of two ATP-binding proteins (MetN), two transmembrane proteins (MetI) and a solute-binding protein (MetQ).</text>
</comment>
<comment type="subcellular location">
    <subcellularLocation>
        <location evidence="1">Cell membrane</location>
        <topology evidence="1">Peripheral membrane protein</topology>
    </subcellularLocation>
</comment>
<comment type="similarity">
    <text evidence="1">Belongs to the ABC transporter superfamily. Methionine importer (TC 3.A.1.24) family.</text>
</comment>